<reference key="1">
    <citation type="journal article" date="1998" name="Science">
        <title>Genome sequence of the nematode C. elegans: a platform for investigating biology.</title>
        <authorList>
            <consortium name="The C. elegans sequencing consortium"/>
        </authorList>
    </citation>
    <scope>NUCLEOTIDE SEQUENCE [LARGE SCALE GENOMIC DNA]</scope>
    <scope>ALTERNATIVE SPLICING</scope>
    <source>
        <strain>Bristol N2</strain>
    </source>
</reference>
<reference key="2">
    <citation type="journal article" date="2003" name="Nat. Biotechnol.">
        <title>Lectin affinity capture, isotope-coded tagging and mass spectrometry to identify N-linked glycoproteins.</title>
        <authorList>
            <person name="Kaji H."/>
            <person name="Saito H."/>
            <person name="Yamauchi Y."/>
            <person name="Shinkawa T."/>
            <person name="Taoka M."/>
            <person name="Hirabayashi J."/>
            <person name="Kasai K."/>
            <person name="Takahashi N."/>
            <person name="Isobe T."/>
        </authorList>
    </citation>
    <scope>GLYCOSYLATION [LARGE SCALE ANALYSIS] AT ASN-68</scope>
    <scope>IDENTIFICATION BY MASS SPECTROMETRY</scope>
    <source>
        <strain>Bristol N2</strain>
    </source>
</reference>
<reference key="3">
    <citation type="journal article" date="2007" name="Mol. Cell. Proteomics">
        <title>Proteomics reveals N-linked glycoprotein diversity in Caenorhabditis elegans and suggests an atypical translocation mechanism for integral membrane proteins.</title>
        <authorList>
            <person name="Kaji H."/>
            <person name="Kamiie J."/>
            <person name="Kawakami H."/>
            <person name="Kido K."/>
            <person name="Yamauchi Y."/>
            <person name="Shinkawa T."/>
            <person name="Taoka M."/>
            <person name="Takahashi N."/>
            <person name="Isobe T."/>
        </authorList>
    </citation>
    <scope>GLYCOSYLATION [LARGE SCALE ANALYSIS] AT ASN-68</scope>
    <scope>IDENTIFICATION BY MASS SPECTROMETRY</scope>
    <source>
        <strain>Bristol N2</strain>
    </source>
</reference>
<organism>
    <name type="scientific">Caenorhabditis elegans</name>
    <dbReference type="NCBI Taxonomy" id="6239"/>
    <lineage>
        <taxon>Eukaryota</taxon>
        <taxon>Metazoa</taxon>
        <taxon>Ecdysozoa</taxon>
        <taxon>Nematoda</taxon>
        <taxon>Chromadorea</taxon>
        <taxon>Rhabditida</taxon>
        <taxon>Rhabditina</taxon>
        <taxon>Rhabditomorpha</taxon>
        <taxon>Rhabditoidea</taxon>
        <taxon>Rhabditidae</taxon>
        <taxon>Peloderinae</taxon>
        <taxon>Caenorhabditis</taxon>
    </lineage>
</organism>
<evidence type="ECO:0000255" key="1"/>
<evidence type="ECO:0000269" key="2">
    <source>
    </source>
</evidence>
<evidence type="ECO:0000269" key="3">
    <source>
    </source>
</evidence>
<evidence type="ECO:0000305" key="4"/>
<dbReference type="EMBL" id="FO080303">
    <property type="protein sequence ID" value="CCD62733.1"/>
    <property type="molecule type" value="Genomic_DNA"/>
</dbReference>
<dbReference type="PIR" id="T33774">
    <property type="entry name" value="T33774"/>
</dbReference>
<dbReference type="RefSeq" id="NP_504373.2">
    <property type="nucleotide sequence ID" value="NM_071972.8"/>
</dbReference>
<dbReference type="SMR" id="Q9GUC9"/>
<dbReference type="STRING" id="6239.F14F9.5.1"/>
<dbReference type="iPTMnet" id="Q9GUC9"/>
<dbReference type="PaxDb" id="6239-F14F9.5"/>
<dbReference type="EnsemblMetazoa" id="F14F9.5.1">
    <property type="protein sequence ID" value="F14F9.5.1"/>
    <property type="gene ID" value="WBGene00017468"/>
</dbReference>
<dbReference type="GeneID" id="184485"/>
<dbReference type="KEGG" id="cel:CELE_F14F9.5"/>
<dbReference type="UCSC" id="F14F9.5">
    <property type="organism name" value="c. elegans"/>
</dbReference>
<dbReference type="AGR" id="WB:WBGene00017468"/>
<dbReference type="CTD" id="184485"/>
<dbReference type="WormBase" id="F14F9.5">
    <property type="protein sequence ID" value="CE35275"/>
    <property type="gene ID" value="WBGene00017468"/>
</dbReference>
<dbReference type="eggNOG" id="ENOG502RYZR">
    <property type="taxonomic scope" value="Eukaryota"/>
</dbReference>
<dbReference type="HOGENOM" id="CLU_049141_0_0_1"/>
<dbReference type="InParanoid" id="Q9GUC9"/>
<dbReference type="OMA" id="YTAHLDY"/>
<dbReference type="OrthoDB" id="276515at2759"/>
<dbReference type="PRO" id="PR:Q9GUC9"/>
<dbReference type="Proteomes" id="UP000001940">
    <property type="component" value="Chromosome V"/>
</dbReference>
<dbReference type="Bgee" id="WBGene00017468">
    <property type="expression patterns" value="Expressed in adult organism and 3 other cell types or tissues"/>
</dbReference>
<dbReference type="GO" id="GO:0005576">
    <property type="term" value="C:extracellular region"/>
    <property type="evidence" value="ECO:0007669"/>
    <property type="project" value="UniProtKB-SubCell"/>
</dbReference>
<dbReference type="GO" id="GO:0003824">
    <property type="term" value="F:catalytic activity"/>
    <property type="evidence" value="ECO:0007669"/>
    <property type="project" value="InterPro"/>
</dbReference>
<dbReference type="Gene3D" id="3.60.10.10">
    <property type="entry name" value="Endonuclease/exonuclease/phosphatase"/>
    <property type="match status" value="1"/>
</dbReference>
<dbReference type="InterPro" id="IPR036691">
    <property type="entry name" value="Endo/exonu/phosph_ase_sf"/>
</dbReference>
<dbReference type="InterPro" id="IPR005135">
    <property type="entry name" value="Endo/exonuclease/phosphatase"/>
</dbReference>
<dbReference type="PANTHER" id="PTHR41349">
    <property type="match status" value="1"/>
</dbReference>
<dbReference type="PANTHER" id="PTHR41349:SF1">
    <property type="entry name" value="PROTEIN CBG08683"/>
    <property type="match status" value="1"/>
</dbReference>
<dbReference type="Pfam" id="PF03372">
    <property type="entry name" value="Exo_endo_phos"/>
    <property type="match status" value="2"/>
</dbReference>
<dbReference type="SUPFAM" id="SSF56219">
    <property type="entry name" value="DNase I-like"/>
    <property type="match status" value="1"/>
</dbReference>
<keyword id="KW-0325">Glycoprotein</keyword>
<keyword id="KW-1185">Reference proteome</keyword>
<keyword id="KW-0964">Secreted</keyword>
<keyword id="KW-0732">Signal</keyword>
<proteinExistence type="evidence at protein level"/>
<gene>
    <name type="ORF">F14F9.5</name>
</gene>
<feature type="signal peptide" evidence="1">
    <location>
        <begin position="1"/>
        <end position="18"/>
    </location>
</feature>
<feature type="chain" id="PRO_0000248541" description="Uncharacterized protein F14F9.5">
    <location>
        <begin position="19"/>
        <end position="314"/>
    </location>
</feature>
<feature type="glycosylation site" description="N-linked (GlcNAc...) asparagine" evidence="2 3">
    <location>
        <position position="68"/>
    </location>
</feature>
<feature type="glycosylation site" description="N-linked (GlcNAc...) asparagine" evidence="1">
    <location>
        <position position="72"/>
    </location>
</feature>
<feature type="glycosylation site" description="N-linked (GlcNAc...) asparagine" evidence="1">
    <location>
        <position position="106"/>
    </location>
</feature>
<feature type="glycosylation site" description="N-linked (GlcNAc...) asparagine" evidence="1">
    <location>
        <position position="256"/>
    </location>
</feature>
<comment type="subcellular location">
    <subcellularLocation>
        <location evidence="4">Secreted</location>
    </subcellularLocation>
</comment>
<name>YFEF9_CAEEL</name>
<protein>
    <recommendedName>
        <fullName>Uncharacterized protein F14F9.5</fullName>
    </recommendedName>
</protein>
<sequence length="314" mass="36170">MLIQILFLIILTLNCSYSTSYSTSNGIRLMTFNIWNSGANVENGQQKIAKHILMVNPDVVALQEVYANVTRNLTLMLGHPWVAVERNHEYPDTAILTRHVLIPNTNLSTSGAVGVKIMLRTGFMIHFWSLHLDYTSYGPYAANNKLVDKLDQIMAGENVGRGPQIYEILNLPMMKKWMEKVEDVPIFIAGDFNGPSHLDWTEQTKKIHGDWVIRWPATKELEEREFSDTFREIYPNVVSDPGITWSTVNKFNPEWNYTIPEPQDRIDFLFYKGPVVPYQILTYSGCEKPQRIPFHSKNDYPSDHFAVFADYTFI</sequence>
<accession>Q9GUC9</accession>